<comment type="similarity">
    <text evidence="2">Belongs to the NAD(P)-dependent epimerase/dehydratase family. dTDP-glucose dehydratase subfamily.</text>
</comment>
<accession>Q58455</accession>
<feature type="chain" id="PRO_0000183264" description="Uncharacterized protein MJ1055">
    <location>
        <begin position="1"/>
        <end position="326"/>
    </location>
</feature>
<feature type="active site" description="Proton acceptor" evidence="1">
    <location>
        <position position="157"/>
    </location>
</feature>
<feature type="binding site" evidence="1">
    <location>
        <position position="132"/>
    </location>
    <ligand>
        <name>substrate</name>
    </ligand>
</feature>
<organism>
    <name type="scientific">Methanocaldococcus jannaschii (strain ATCC 43067 / DSM 2661 / JAL-1 / JCM 10045 / NBRC 100440)</name>
    <name type="common">Methanococcus jannaschii</name>
    <dbReference type="NCBI Taxonomy" id="243232"/>
    <lineage>
        <taxon>Archaea</taxon>
        <taxon>Methanobacteriati</taxon>
        <taxon>Methanobacteriota</taxon>
        <taxon>Methanomada group</taxon>
        <taxon>Methanococci</taxon>
        <taxon>Methanococcales</taxon>
        <taxon>Methanocaldococcaceae</taxon>
        <taxon>Methanocaldococcus</taxon>
    </lineage>
</organism>
<sequence length="326" mass="38369">MKYKNILVTGSAGFIGFHLSKYLMDNYEDLKVIGIDNLNNYYNPVLKEKRNEILKNYENYTFIKLDFSDWDDLVENLKDKEIDLIVHLGAQAGVRYSLQNPWAYIKSNEMGTLNIFEFARRFDIEKVVYASSSSVYGGNRKIPFSEDDRVDKPISLYASTKRSNELMAHVYHHLYGIKMIGLRFFTVYGEYGRPDMAYFKFAKNILLGKEIEVYNYGNMERDFTYISDVVDGILRAIKKDFDYEIFNLGNSKPVKLMYFIELIEKYLNKKAKKKFLPMQDGDVLRTYADLSKSEKLLGYKPKVTIEEGLKRFCNWFLENKDWLLRL</sequence>
<proteinExistence type="inferred from homology"/>
<evidence type="ECO:0000250" key="1"/>
<evidence type="ECO:0000305" key="2"/>
<gene>
    <name type="ordered locus">MJ1055</name>
</gene>
<reference key="1">
    <citation type="journal article" date="1996" name="Science">
        <title>Complete genome sequence of the methanogenic archaeon, Methanococcus jannaschii.</title>
        <authorList>
            <person name="Bult C.J."/>
            <person name="White O."/>
            <person name="Olsen G.J."/>
            <person name="Zhou L."/>
            <person name="Fleischmann R.D."/>
            <person name="Sutton G.G."/>
            <person name="Blake J.A."/>
            <person name="FitzGerald L.M."/>
            <person name="Clayton R.A."/>
            <person name="Gocayne J.D."/>
            <person name="Kerlavage A.R."/>
            <person name="Dougherty B.A."/>
            <person name="Tomb J.-F."/>
            <person name="Adams M.D."/>
            <person name="Reich C.I."/>
            <person name="Overbeek R."/>
            <person name="Kirkness E.F."/>
            <person name="Weinstock K.G."/>
            <person name="Merrick J.M."/>
            <person name="Glodek A."/>
            <person name="Scott J.L."/>
            <person name="Geoghagen N.S.M."/>
            <person name="Weidman J.F."/>
            <person name="Fuhrmann J.L."/>
            <person name="Nguyen D."/>
            <person name="Utterback T.R."/>
            <person name="Kelley J.M."/>
            <person name="Peterson J.D."/>
            <person name="Sadow P.W."/>
            <person name="Hanna M.C."/>
            <person name="Cotton M.D."/>
            <person name="Roberts K.M."/>
            <person name="Hurst M.A."/>
            <person name="Kaine B.P."/>
            <person name="Borodovsky M."/>
            <person name="Klenk H.-P."/>
            <person name="Fraser C.M."/>
            <person name="Smith H.O."/>
            <person name="Woese C.R."/>
            <person name="Venter J.C."/>
        </authorList>
    </citation>
    <scope>NUCLEOTIDE SEQUENCE [LARGE SCALE GENOMIC DNA]</scope>
    <source>
        <strain>ATCC 43067 / DSM 2661 / JAL-1 / JCM 10045 / NBRC 100440</strain>
    </source>
</reference>
<keyword id="KW-0456">Lyase</keyword>
<keyword id="KW-0520">NAD</keyword>
<keyword id="KW-1185">Reference proteome</keyword>
<protein>
    <recommendedName>
        <fullName>Uncharacterized protein MJ1055</fullName>
    </recommendedName>
</protein>
<dbReference type="EMBL" id="L77117">
    <property type="protein sequence ID" value="AAB99057.1"/>
    <property type="molecule type" value="Genomic_DNA"/>
</dbReference>
<dbReference type="PIR" id="F64431">
    <property type="entry name" value="F64431"/>
</dbReference>
<dbReference type="RefSeq" id="WP_010870568.1">
    <property type="nucleotide sequence ID" value="NC_000909.1"/>
</dbReference>
<dbReference type="SMR" id="Q58455"/>
<dbReference type="FunCoup" id="Q58455">
    <property type="interactions" value="123"/>
</dbReference>
<dbReference type="STRING" id="243232.MJ_1055"/>
<dbReference type="PaxDb" id="243232-MJ_1055"/>
<dbReference type="EnsemblBacteria" id="AAB99057">
    <property type="protein sequence ID" value="AAB99057"/>
    <property type="gene ID" value="MJ_1055"/>
</dbReference>
<dbReference type="GeneID" id="1451952"/>
<dbReference type="KEGG" id="mja:MJ_1055"/>
<dbReference type="eggNOG" id="arCOG01369">
    <property type="taxonomic scope" value="Archaea"/>
</dbReference>
<dbReference type="HOGENOM" id="CLU_007383_1_7_2"/>
<dbReference type="InParanoid" id="Q58455"/>
<dbReference type="OrthoDB" id="4907at2157"/>
<dbReference type="PhylomeDB" id="Q58455"/>
<dbReference type="Proteomes" id="UP000000805">
    <property type="component" value="Chromosome"/>
</dbReference>
<dbReference type="GO" id="GO:0016829">
    <property type="term" value="F:lyase activity"/>
    <property type="evidence" value="ECO:0007669"/>
    <property type="project" value="UniProtKB-KW"/>
</dbReference>
<dbReference type="CDD" id="cd05253">
    <property type="entry name" value="UDP_GE_SDE_e"/>
    <property type="match status" value="1"/>
</dbReference>
<dbReference type="Gene3D" id="3.40.50.720">
    <property type="entry name" value="NAD(P)-binding Rossmann-like Domain"/>
    <property type="match status" value="1"/>
</dbReference>
<dbReference type="Gene3D" id="3.90.25.10">
    <property type="entry name" value="UDP-galactose 4-epimerase, domain 1"/>
    <property type="match status" value="1"/>
</dbReference>
<dbReference type="InterPro" id="IPR001509">
    <property type="entry name" value="Epimerase_deHydtase"/>
</dbReference>
<dbReference type="InterPro" id="IPR036291">
    <property type="entry name" value="NAD(P)-bd_dom_sf"/>
</dbReference>
<dbReference type="PANTHER" id="PTHR43574">
    <property type="entry name" value="EPIMERASE-RELATED"/>
    <property type="match status" value="1"/>
</dbReference>
<dbReference type="Pfam" id="PF01370">
    <property type="entry name" value="Epimerase"/>
    <property type="match status" value="1"/>
</dbReference>
<dbReference type="PRINTS" id="PR01713">
    <property type="entry name" value="NUCEPIMERASE"/>
</dbReference>
<dbReference type="SUPFAM" id="SSF51735">
    <property type="entry name" value="NAD(P)-binding Rossmann-fold domains"/>
    <property type="match status" value="1"/>
</dbReference>
<name>Y1055_METJA</name>